<organism>
    <name type="scientific">Jannaschia sp. (strain CCS1)</name>
    <dbReference type="NCBI Taxonomy" id="290400"/>
    <lineage>
        <taxon>Bacteria</taxon>
        <taxon>Pseudomonadati</taxon>
        <taxon>Pseudomonadota</taxon>
        <taxon>Alphaproteobacteria</taxon>
        <taxon>Rhodobacterales</taxon>
        <taxon>Roseobacteraceae</taxon>
        <taxon>Jannaschia</taxon>
    </lineage>
</organism>
<reference key="1">
    <citation type="submission" date="2006-02" db="EMBL/GenBank/DDBJ databases">
        <title>Complete sequence of chromosome of Jannaschia sp. CCS1.</title>
        <authorList>
            <consortium name="US DOE Joint Genome Institute"/>
            <person name="Copeland A."/>
            <person name="Lucas S."/>
            <person name="Lapidus A."/>
            <person name="Barry K."/>
            <person name="Detter J.C."/>
            <person name="Glavina del Rio T."/>
            <person name="Hammon N."/>
            <person name="Israni S."/>
            <person name="Pitluck S."/>
            <person name="Brettin T."/>
            <person name="Bruce D."/>
            <person name="Han C."/>
            <person name="Tapia R."/>
            <person name="Gilna P."/>
            <person name="Chertkov O."/>
            <person name="Saunders E."/>
            <person name="Schmutz J."/>
            <person name="Larimer F."/>
            <person name="Land M."/>
            <person name="Kyrpides N."/>
            <person name="Lykidis A."/>
            <person name="Moran M.A."/>
            <person name="Belas R."/>
            <person name="Ye W."/>
            <person name="Buchan A."/>
            <person name="Gonzalez J.M."/>
            <person name="Schell M.A."/>
            <person name="Richardson P."/>
        </authorList>
    </citation>
    <scope>NUCLEOTIDE SEQUENCE [LARGE SCALE GENOMIC DNA]</scope>
    <source>
        <strain>CCS1</strain>
    </source>
</reference>
<evidence type="ECO:0000255" key="1">
    <source>
        <dbReference type="HAMAP-Rule" id="MF_00049"/>
    </source>
</evidence>
<keyword id="KW-0030">Aminoacyl-tRNA synthetase</keyword>
<keyword id="KW-0067">ATP-binding</keyword>
<keyword id="KW-0963">Cytoplasm</keyword>
<keyword id="KW-0436">Ligase</keyword>
<keyword id="KW-0547">Nucleotide-binding</keyword>
<keyword id="KW-0648">Protein biosynthesis</keyword>
<keyword id="KW-1185">Reference proteome</keyword>
<gene>
    <name evidence="1" type="primary">leuS</name>
    <name type="ordered locus">Jann_0411</name>
</gene>
<proteinExistence type="inferred from homology"/>
<feature type="chain" id="PRO_1000009355" description="Leucine--tRNA ligase">
    <location>
        <begin position="1"/>
        <end position="863"/>
    </location>
</feature>
<feature type="short sequence motif" description="'HIGH' region">
    <location>
        <begin position="41"/>
        <end position="51"/>
    </location>
</feature>
<feature type="short sequence motif" description="'KMSKS' region">
    <location>
        <begin position="627"/>
        <end position="631"/>
    </location>
</feature>
<feature type="binding site" evidence="1">
    <location>
        <position position="630"/>
    </location>
    <ligand>
        <name>ATP</name>
        <dbReference type="ChEBI" id="CHEBI:30616"/>
    </ligand>
</feature>
<sequence length="863" mass="95767">MSRYDPSMIEPKWQKAWAEAGTFTASMEGNKPKYYVLEMFPYPSGRIHIGHVRNYTMGDVIARHKKAMGHNVLHPMGFDAFGLAAENAAMDRGIHPKDWTYKNMDDMRDQMRPLGFSIDWSRDLATCDPDYYGQQQALFIDMMEAGLIDRKNAVVNWDPVDMTVLANEQVEDGKGWRSGAEVERKELTQWFFKISDYSDELLEALDGLDDWPAKVKLMQANWIGKSRGLQFAFGLVEPVGGHDRVDVYTTRPDTLLGASFVGISPDHAIAKQLESESEDIAAFCAECRKGGTTAAEVETAEKLGFDTGLKVRHPFDTAAQLPVYIANFILMDYGTGAIFGCPAHDERDLDFARKYDLPVVSTYVPIDDEGHVLPEDGGAAYVPPKPDPVRYIRGFAGEEIQSGNDAIDAAVTFCEAEGVGQGVTKFRLRDWGLSRQRYWGCPIPVVHCDACGVVPEKKENLPIELPYDVTFDVPGNPLDRHPTWRNTPCPSCGAPALRETDTMDTFVDSSWYFARFTAPHADTPTSKAEVEYWMNVDQYIGGIEHAILHLLYSRFFARAMHITGHLPRKAIEPFDALFTQGMVTHAIYKTTDAKNRPVYHYPETVDLRDGGGYLDDGTAVEIIPSAKMSKSKNNVVDPIEIIKQYGADTARWFVLSDSPPERDVEWTASGAEAAYKHLGRVWALCDRISEAARSVSEEAQPAAGEHDTALLREMHKTIRDVTNGVDSFGFNAAIAKLYAFTNTLQKSKASHKAQREAVMTLAQLMAPMTPHLSEDIWAHQGGDGLIADAPWPVANEAMLVESTVTLPIQINGKRRSEVTVAKDASKEEVEKRALADDAVVRALDGAAPKKLIVVPGRIVNVVI</sequence>
<name>SYL_JANSC</name>
<comment type="catalytic activity">
    <reaction evidence="1">
        <text>tRNA(Leu) + L-leucine + ATP = L-leucyl-tRNA(Leu) + AMP + diphosphate</text>
        <dbReference type="Rhea" id="RHEA:11688"/>
        <dbReference type="Rhea" id="RHEA-COMP:9613"/>
        <dbReference type="Rhea" id="RHEA-COMP:9622"/>
        <dbReference type="ChEBI" id="CHEBI:30616"/>
        <dbReference type="ChEBI" id="CHEBI:33019"/>
        <dbReference type="ChEBI" id="CHEBI:57427"/>
        <dbReference type="ChEBI" id="CHEBI:78442"/>
        <dbReference type="ChEBI" id="CHEBI:78494"/>
        <dbReference type="ChEBI" id="CHEBI:456215"/>
        <dbReference type="EC" id="6.1.1.4"/>
    </reaction>
</comment>
<comment type="subcellular location">
    <subcellularLocation>
        <location evidence="1">Cytoplasm</location>
    </subcellularLocation>
</comment>
<comment type="similarity">
    <text evidence="1">Belongs to the class-I aminoacyl-tRNA synthetase family.</text>
</comment>
<protein>
    <recommendedName>
        <fullName evidence="1">Leucine--tRNA ligase</fullName>
        <ecNumber evidence="1">6.1.1.4</ecNumber>
    </recommendedName>
    <alternativeName>
        <fullName evidence="1">Leucyl-tRNA synthetase</fullName>
        <shortName evidence="1">LeuRS</shortName>
    </alternativeName>
</protein>
<dbReference type="EC" id="6.1.1.4" evidence="1"/>
<dbReference type="EMBL" id="CP000264">
    <property type="protein sequence ID" value="ABD53328.1"/>
    <property type="molecule type" value="Genomic_DNA"/>
</dbReference>
<dbReference type="RefSeq" id="WP_011453537.1">
    <property type="nucleotide sequence ID" value="NC_007802.1"/>
</dbReference>
<dbReference type="SMR" id="Q28VD4"/>
<dbReference type="STRING" id="290400.Jann_0411"/>
<dbReference type="KEGG" id="jan:Jann_0411"/>
<dbReference type="eggNOG" id="COG0495">
    <property type="taxonomic scope" value="Bacteria"/>
</dbReference>
<dbReference type="HOGENOM" id="CLU_004427_0_0_5"/>
<dbReference type="OrthoDB" id="9810365at2"/>
<dbReference type="Proteomes" id="UP000008326">
    <property type="component" value="Chromosome"/>
</dbReference>
<dbReference type="GO" id="GO:0005829">
    <property type="term" value="C:cytosol"/>
    <property type="evidence" value="ECO:0007669"/>
    <property type="project" value="TreeGrafter"/>
</dbReference>
<dbReference type="GO" id="GO:0002161">
    <property type="term" value="F:aminoacyl-tRNA deacylase activity"/>
    <property type="evidence" value="ECO:0007669"/>
    <property type="project" value="InterPro"/>
</dbReference>
<dbReference type="GO" id="GO:0005524">
    <property type="term" value="F:ATP binding"/>
    <property type="evidence" value="ECO:0007669"/>
    <property type="project" value="UniProtKB-UniRule"/>
</dbReference>
<dbReference type="GO" id="GO:0004823">
    <property type="term" value="F:leucine-tRNA ligase activity"/>
    <property type="evidence" value="ECO:0007669"/>
    <property type="project" value="UniProtKB-UniRule"/>
</dbReference>
<dbReference type="GO" id="GO:0006429">
    <property type="term" value="P:leucyl-tRNA aminoacylation"/>
    <property type="evidence" value="ECO:0007669"/>
    <property type="project" value="UniProtKB-UniRule"/>
</dbReference>
<dbReference type="CDD" id="cd07958">
    <property type="entry name" value="Anticodon_Ia_Leu_BEm"/>
    <property type="match status" value="1"/>
</dbReference>
<dbReference type="CDD" id="cd00812">
    <property type="entry name" value="LeuRS_core"/>
    <property type="match status" value="1"/>
</dbReference>
<dbReference type="FunFam" id="1.10.730.10:FF:000002">
    <property type="entry name" value="Leucine--tRNA ligase"/>
    <property type="match status" value="1"/>
</dbReference>
<dbReference type="FunFam" id="3.10.20.590:FF:000001">
    <property type="entry name" value="Leucine--tRNA ligase"/>
    <property type="match status" value="1"/>
</dbReference>
<dbReference type="FunFam" id="3.40.50.620:FF:000003">
    <property type="entry name" value="Leucine--tRNA ligase"/>
    <property type="match status" value="1"/>
</dbReference>
<dbReference type="Gene3D" id="2.20.28.290">
    <property type="match status" value="1"/>
</dbReference>
<dbReference type="Gene3D" id="3.10.20.590">
    <property type="match status" value="1"/>
</dbReference>
<dbReference type="Gene3D" id="3.40.50.620">
    <property type="entry name" value="HUPs"/>
    <property type="match status" value="2"/>
</dbReference>
<dbReference type="Gene3D" id="1.10.730.10">
    <property type="entry name" value="Isoleucyl-tRNA Synthetase, Domain 1"/>
    <property type="match status" value="1"/>
</dbReference>
<dbReference type="Gene3D" id="3.90.740.10">
    <property type="entry name" value="Valyl/Leucyl/Isoleucyl-tRNA synthetase, editing domain"/>
    <property type="match status" value="1"/>
</dbReference>
<dbReference type="HAMAP" id="MF_00049_B">
    <property type="entry name" value="Leu_tRNA_synth_B"/>
    <property type="match status" value="1"/>
</dbReference>
<dbReference type="InterPro" id="IPR001412">
    <property type="entry name" value="aa-tRNA-synth_I_CS"/>
</dbReference>
<dbReference type="InterPro" id="IPR002300">
    <property type="entry name" value="aa-tRNA-synth_Ia"/>
</dbReference>
<dbReference type="InterPro" id="IPR002302">
    <property type="entry name" value="Leu-tRNA-ligase"/>
</dbReference>
<dbReference type="InterPro" id="IPR025709">
    <property type="entry name" value="Leu_tRNA-synth_edit"/>
</dbReference>
<dbReference type="InterPro" id="IPR013155">
    <property type="entry name" value="M/V/L/I-tRNA-synth_anticd-bd"/>
</dbReference>
<dbReference type="InterPro" id="IPR015413">
    <property type="entry name" value="Methionyl/Leucyl_tRNA_Synth"/>
</dbReference>
<dbReference type="InterPro" id="IPR014729">
    <property type="entry name" value="Rossmann-like_a/b/a_fold"/>
</dbReference>
<dbReference type="InterPro" id="IPR009080">
    <property type="entry name" value="tRNAsynth_Ia_anticodon-bd"/>
</dbReference>
<dbReference type="InterPro" id="IPR009008">
    <property type="entry name" value="Val/Leu/Ile-tRNA-synth_edit"/>
</dbReference>
<dbReference type="NCBIfam" id="TIGR00396">
    <property type="entry name" value="leuS_bact"/>
    <property type="match status" value="1"/>
</dbReference>
<dbReference type="PANTHER" id="PTHR43740:SF2">
    <property type="entry name" value="LEUCINE--TRNA LIGASE, MITOCHONDRIAL"/>
    <property type="match status" value="1"/>
</dbReference>
<dbReference type="PANTHER" id="PTHR43740">
    <property type="entry name" value="LEUCYL-TRNA SYNTHETASE"/>
    <property type="match status" value="1"/>
</dbReference>
<dbReference type="Pfam" id="PF08264">
    <property type="entry name" value="Anticodon_1"/>
    <property type="match status" value="1"/>
</dbReference>
<dbReference type="Pfam" id="PF00133">
    <property type="entry name" value="tRNA-synt_1"/>
    <property type="match status" value="2"/>
</dbReference>
<dbReference type="Pfam" id="PF13603">
    <property type="entry name" value="tRNA-synt_1_2"/>
    <property type="match status" value="1"/>
</dbReference>
<dbReference type="Pfam" id="PF09334">
    <property type="entry name" value="tRNA-synt_1g"/>
    <property type="match status" value="1"/>
</dbReference>
<dbReference type="PRINTS" id="PR00985">
    <property type="entry name" value="TRNASYNTHLEU"/>
</dbReference>
<dbReference type="SUPFAM" id="SSF47323">
    <property type="entry name" value="Anticodon-binding domain of a subclass of class I aminoacyl-tRNA synthetases"/>
    <property type="match status" value="1"/>
</dbReference>
<dbReference type="SUPFAM" id="SSF52374">
    <property type="entry name" value="Nucleotidylyl transferase"/>
    <property type="match status" value="1"/>
</dbReference>
<dbReference type="SUPFAM" id="SSF50677">
    <property type="entry name" value="ValRS/IleRS/LeuRS editing domain"/>
    <property type="match status" value="1"/>
</dbReference>
<dbReference type="PROSITE" id="PS00178">
    <property type="entry name" value="AA_TRNA_LIGASE_I"/>
    <property type="match status" value="1"/>
</dbReference>
<accession>Q28VD4</accession>